<proteinExistence type="inferred from homology"/>
<evidence type="ECO:0000255" key="1">
    <source>
        <dbReference type="HAMAP-Rule" id="MF_00313"/>
    </source>
</evidence>
<keyword id="KW-0378">Hydrolase</keyword>
<keyword id="KW-1185">Reference proteome</keyword>
<feature type="chain" id="PRO_0000110626" description="Glutaminase">
    <location>
        <begin position="1"/>
        <end position="313"/>
    </location>
</feature>
<feature type="binding site" evidence="1">
    <location>
        <position position="73"/>
    </location>
    <ligand>
        <name>substrate</name>
    </ligand>
</feature>
<feature type="binding site" evidence="1">
    <location>
        <position position="123"/>
    </location>
    <ligand>
        <name>substrate</name>
    </ligand>
</feature>
<feature type="binding site" evidence="1">
    <location>
        <position position="167"/>
    </location>
    <ligand>
        <name>substrate</name>
    </ligand>
</feature>
<feature type="binding site" evidence="1">
    <location>
        <position position="174"/>
    </location>
    <ligand>
        <name>substrate</name>
    </ligand>
</feature>
<feature type="binding site" evidence="1">
    <location>
        <position position="198"/>
    </location>
    <ligand>
        <name>substrate</name>
    </ligand>
</feature>
<feature type="binding site" evidence="1">
    <location>
        <position position="249"/>
    </location>
    <ligand>
        <name>substrate</name>
    </ligand>
</feature>
<feature type="binding site" evidence="1">
    <location>
        <position position="267"/>
    </location>
    <ligand>
        <name>substrate</name>
    </ligand>
</feature>
<organism>
    <name type="scientific">Streptomyces avermitilis (strain ATCC 31267 / DSM 46492 / JCM 5070 / NBRC 14893 / NCIMB 12804 / NRRL 8165 / MA-4680)</name>
    <dbReference type="NCBI Taxonomy" id="227882"/>
    <lineage>
        <taxon>Bacteria</taxon>
        <taxon>Bacillati</taxon>
        <taxon>Actinomycetota</taxon>
        <taxon>Actinomycetes</taxon>
        <taxon>Kitasatosporales</taxon>
        <taxon>Streptomycetaceae</taxon>
        <taxon>Streptomyces</taxon>
    </lineage>
</organism>
<comment type="catalytic activity">
    <reaction evidence="1">
        <text>L-glutamine + H2O = L-glutamate + NH4(+)</text>
        <dbReference type="Rhea" id="RHEA:15889"/>
        <dbReference type="ChEBI" id="CHEBI:15377"/>
        <dbReference type="ChEBI" id="CHEBI:28938"/>
        <dbReference type="ChEBI" id="CHEBI:29985"/>
        <dbReference type="ChEBI" id="CHEBI:58359"/>
        <dbReference type="EC" id="3.5.1.2"/>
    </reaction>
</comment>
<comment type="subunit">
    <text evidence="1">Homotetramer.</text>
</comment>
<comment type="similarity">
    <text evidence="1">Belongs to the glutaminase family.</text>
</comment>
<gene>
    <name evidence="1" type="primary">glsA</name>
    <name type="ordered locus">SAV_1314</name>
</gene>
<sequence>MVIMSASWSSHAFQPVLERIADEIERTPGRGRPADYIPALAACDPRRFGMAVAELDGTVYGVGDWRQPFSTQSITKVFTLALDLAREGDALWEHVGREPSGNPFNSLVQLEYESGIPRNPFINAGALVVTDRLQTQTGDAAGSLLEFLRAESGNPRLTFDQDVAASEAAHGDRNAALGHFMASYGNIDNSVPVLLDQYFRQCSIEASCADLALATGFLARHGIRADGSRLLTQSQAKQVNAVMLTCGTYDAAGDFAYRVGLPGKSGVGGGIIAVVPGRCTLCVWSPGLDERGNSVAGVAALDRFTTLTGVSVF</sequence>
<protein>
    <recommendedName>
        <fullName evidence="1">Glutaminase</fullName>
        <ecNumber evidence="1">3.5.1.2</ecNumber>
    </recommendedName>
</protein>
<reference key="1">
    <citation type="journal article" date="2001" name="Proc. Natl. Acad. Sci. U.S.A.">
        <title>Genome sequence of an industrial microorganism Streptomyces avermitilis: deducing the ability of producing secondary metabolites.</title>
        <authorList>
            <person name="Omura S."/>
            <person name="Ikeda H."/>
            <person name="Ishikawa J."/>
            <person name="Hanamoto A."/>
            <person name="Takahashi C."/>
            <person name="Shinose M."/>
            <person name="Takahashi Y."/>
            <person name="Horikawa H."/>
            <person name="Nakazawa H."/>
            <person name="Osonoe T."/>
            <person name="Kikuchi H."/>
            <person name="Shiba T."/>
            <person name="Sakaki Y."/>
            <person name="Hattori M."/>
        </authorList>
    </citation>
    <scope>NUCLEOTIDE SEQUENCE [LARGE SCALE GENOMIC DNA]</scope>
    <source>
        <strain>ATCC 31267 / DSM 46492 / JCM 5070 / NBRC 14893 / NCIMB 12804 / NRRL 8165 / MA-4680</strain>
    </source>
</reference>
<reference key="2">
    <citation type="journal article" date="2003" name="Nat. Biotechnol.">
        <title>Complete genome sequence and comparative analysis of the industrial microorganism Streptomyces avermitilis.</title>
        <authorList>
            <person name="Ikeda H."/>
            <person name="Ishikawa J."/>
            <person name="Hanamoto A."/>
            <person name="Shinose M."/>
            <person name="Kikuchi H."/>
            <person name="Shiba T."/>
            <person name="Sakaki Y."/>
            <person name="Hattori M."/>
            <person name="Omura S."/>
        </authorList>
    </citation>
    <scope>NUCLEOTIDE SEQUENCE [LARGE SCALE GENOMIC DNA]</scope>
    <source>
        <strain>ATCC 31267 / DSM 46492 / JCM 5070 / NBRC 14893 / NCIMB 12804 / NRRL 8165 / MA-4680</strain>
    </source>
</reference>
<dbReference type="EC" id="3.5.1.2" evidence="1"/>
<dbReference type="EMBL" id="BA000030">
    <property type="protein sequence ID" value="BAC69024.1"/>
    <property type="molecule type" value="Genomic_DNA"/>
</dbReference>
<dbReference type="RefSeq" id="WP_010982752.1">
    <property type="nucleotide sequence ID" value="NZ_JZJK01000078.1"/>
</dbReference>
<dbReference type="SMR" id="Q82NI9"/>
<dbReference type="GeneID" id="41538412"/>
<dbReference type="KEGG" id="sma:SAVERM_1314"/>
<dbReference type="eggNOG" id="COG2066">
    <property type="taxonomic scope" value="Bacteria"/>
</dbReference>
<dbReference type="HOGENOM" id="CLU_027932_1_1_11"/>
<dbReference type="OrthoDB" id="9788822at2"/>
<dbReference type="Proteomes" id="UP000000428">
    <property type="component" value="Chromosome"/>
</dbReference>
<dbReference type="GO" id="GO:0004359">
    <property type="term" value="F:glutaminase activity"/>
    <property type="evidence" value="ECO:0007669"/>
    <property type="project" value="UniProtKB-UniRule"/>
</dbReference>
<dbReference type="GO" id="GO:0006537">
    <property type="term" value="P:glutamate biosynthetic process"/>
    <property type="evidence" value="ECO:0007669"/>
    <property type="project" value="TreeGrafter"/>
</dbReference>
<dbReference type="GO" id="GO:0006543">
    <property type="term" value="P:glutamine catabolic process"/>
    <property type="evidence" value="ECO:0007669"/>
    <property type="project" value="TreeGrafter"/>
</dbReference>
<dbReference type="FunFam" id="3.40.710.10:FF:000005">
    <property type="entry name" value="Glutaminase"/>
    <property type="match status" value="1"/>
</dbReference>
<dbReference type="Gene3D" id="3.40.710.10">
    <property type="entry name" value="DD-peptidase/beta-lactamase superfamily"/>
    <property type="match status" value="1"/>
</dbReference>
<dbReference type="HAMAP" id="MF_00313">
    <property type="entry name" value="Glutaminase"/>
    <property type="match status" value="1"/>
</dbReference>
<dbReference type="InterPro" id="IPR012338">
    <property type="entry name" value="Beta-lactam/transpept-like"/>
</dbReference>
<dbReference type="InterPro" id="IPR015868">
    <property type="entry name" value="Glutaminase"/>
</dbReference>
<dbReference type="NCBIfam" id="TIGR03814">
    <property type="entry name" value="Gln_ase"/>
    <property type="match status" value="1"/>
</dbReference>
<dbReference type="NCBIfam" id="NF002132">
    <property type="entry name" value="PRK00971.1-1"/>
    <property type="match status" value="1"/>
</dbReference>
<dbReference type="NCBIfam" id="NF002133">
    <property type="entry name" value="PRK00971.1-2"/>
    <property type="match status" value="1"/>
</dbReference>
<dbReference type="PANTHER" id="PTHR12544">
    <property type="entry name" value="GLUTAMINASE"/>
    <property type="match status" value="1"/>
</dbReference>
<dbReference type="PANTHER" id="PTHR12544:SF29">
    <property type="entry name" value="GLUTAMINASE"/>
    <property type="match status" value="1"/>
</dbReference>
<dbReference type="Pfam" id="PF04960">
    <property type="entry name" value="Glutaminase"/>
    <property type="match status" value="1"/>
</dbReference>
<dbReference type="SUPFAM" id="SSF56601">
    <property type="entry name" value="beta-lactamase/transpeptidase-like"/>
    <property type="match status" value="1"/>
</dbReference>
<name>GLSA_STRAW</name>
<accession>Q82NI9</accession>